<reference key="1">
    <citation type="journal article" date="2004" name="Virology">
        <title>Comparative genomic analyses of frog virus 3, type species of the genus Ranavirus (family Iridoviridae).</title>
        <authorList>
            <person name="Tan W.G."/>
            <person name="Barkman T.J."/>
            <person name="Gregory Chinchar V."/>
            <person name="Essani K."/>
        </authorList>
    </citation>
    <scope>NUCLEOTIDE SEQUENCE [LARGE SCALE GENOMIC DNA]</scope>
</reference>
<protein>
    <recommendedName>
        <fullName>Putative collagen-like domain-containing protein 065L</fullName>
    </recommendedName>
</protein>
<organismHost>
    <name type="scientific">Dryophytes versicolor</name>
    <name type="common">chameleon treefrog</name>
    <dbReference type="NCBI Taxonomy" id="30343"/>
</organismHost>
<organismHost>
    <name type="scientific">Lithobates pipiens</name>
    <name type="common">Northern leopard frog</name>
    <name type="synonym">Rana pipiens</name>
    <dbReference type="NCBI Taxonomy" id="8404"/>
</organismHost>
<organismHost>
    <name type="scientific">Lithobates sylvaticus</name>
    <name type="common">Wood frog</name>
    <name type="synonym">Rana sylvatica</name>
    <dbReference type="NCBI Taxonomy" id="45438"/>
</organismHost>
<organismHost>
    <name type="scientific">Notophthalmus viridescens</name>
    <name type="common">Eastern newt</name>
    <name type="synonym">Triturus viridescens</name>
    <dbReference type="NCBI Taxonomy" id="8316"/>
</organismHost>
<proteinExistence type="predicted"/>
<evidence type="ECO:0000256" key="1">
    <source>
        <dbReference type="SAM" id="MobiDB-lite"/>
    </source>
</evidence>
<feature type="chain" id="PRO_0000410507" description="Putative collagen-like domain-containing protein 065L">
    <location>
        <begin position="1"/>
        <end position="54"/>
    </location>
</feature>
<feature type="domain" description="Collagen-like">
    <location>
        <begin position="7"/>
        <end position="51"/>
    </location>
</feature>
<feature type="region of interest" description="Disordered" evidence="1">
    <location>
        <begin position="1"/>
        <end position="54"/>
    </location>
</feature>
<feature type="compositionally biased region" description="Gly residues" evidence="1">
    <location>
        <begin position="26"/>
        <end position="35"/>
    </location>
</feature>
<feature type="compositionally biased region" description="Low complexity" evidence="1">
    <location>
        <begin position="42"/>
        <end position="54"/>
    </location>
</feature>
<dbReference type="EMBL" id="AY548484">
    <property type="protein sequence ID" value="AAT09725.1"/>
    <property type="molecule type" value="Genomic_DNA"/>
</dbReference>
<dbReference type="RefSeq" id="YP_031644.1">
    <property type="nucleotide sequence ID" value="NC_005946.1"/>
</dbReference>
<dbReference type="SMR" id="Q6GZR0"/>
<dbReference type="KEGG" id="vg:2947765"/>
<dbReference type="Proteomes" id="UP000008770">
    <property type="component" value="Segment"/>
</dbReference>
<dbReference type="InterPro" id="IPR008160">
    <property type="entry name" value="Collagen"/>
</dbReference>
<dbReference type="Pfam" id="PF01391">
    <property type="entry name" value="Collagen"/>
    <property type="match status" value="1"/>
</dbReference>
<accession>Q6GZR0</accession>
<organism>
    <name type="scientific">Frog virus 3 (isolate Goorha)</name>
    <name type="common">FV-3</name>
    <dbReference type="NCBI Taxonomy" id="654924"/>
    <lineage>
        <taxon>Viruses</taxon>
        <taxon>Varidnaviria</taxon>
        <taxon>Bamfordvirae</taxon>
        <taxon>Nucleocytoviricota</taxon>
        <taxon>Megaviricetes</taxon>
        <taxon>Pimascovirales</taxon>
        <taxon>Iridoviridae</taxon>
        <taxon>Alphairidovirinae</taxon>
        <taxon>Ranavirus</taxon>
        <taxon>Frog virus 3</taxon>
    </lineage>
</organism>
<name>065L_FRG3G</name>
<sequence>MRGLEAPGAVGPTGPSGAPGSQGPDGDVGGMGPEGPKGDDGPVGPKGPQGAAIF</sequence>
<keyword id="KW-1185">Reference proteome</keyword>
<gene>
    <name type="ORF">FV3-065L</name>
</gene>